<evidence type="ECO:0000255" key="1"/>
<evidence type="ECO:0000305" key="2"/>
<organism>
    <name type="scientific">Rickettsia prowazekii (strain Madrid E)</name>
    <dbReference type="NCBI Taxonomy" id="272947"/>
    <lineage>
        <taxon>Bacteria</taxon>
        <taxon>Pseudomonadati</taxon>
        <taxon>Pseudomonadota</taxon>
        <taxon>Alphaproteobacteria</taxon>
        <taxon>Rickettsiales</taxon>
        <taxon>Rickettsiaceae</taxon>
        <taxon>Rickettsieae</taxon>
        <taxon>Rickettsia</taxon>
        <taxon>typhus group</taxon>
    </lineage>
</organism>
<name>Y231_RICPR</name>
<reference key="1">
    <citation type="journal article" date="1998" name="Nature">
        <title>The genome sequence of Rickettsia prowazekii and the origin of mitochondria.</title>
        <authorList>
            <person name="Andersson S.G.E."/>
            <person name="Zomorodipour A."/>
            <person name="Andersson J.O."/>
            <person name="Sicheritz-Ponten T."/>
            <person name="Alsmark U.C.M."/>
            <person name="Podowski R.M."/>
            <person name="Naeslund A.K."/>
            <person name="Eriksson A.-S."/>
            <person name="Winkler H.H."/>
            <person name="Kurland C.G."/>
        </authorList>
    </citation>
    <scope>NUCLEOTIDE SEQUENCE [LARGE SCALE GENOMIC DNA]</scope>
    <source>
        <strain>Madrid E</strain>
    </source>
</reference>
<gene>
    <name type="ordered locus">RP231</name>
</gene>
<feature type="chain" id="PRO_0000101336" description="Uncharacterized protein RP231">
    <location>
        <begin position="1"/>
        <end position="220"/>
    </location>
</feature>
<feature type="transmembrane region" description="Helical" evidence="1">
    <location>
        <begin position="20"/>
        <end position="42"/>
    </location>
</feature>
<protein>
    <recommendedName>
        <fullName>Uncharacterized protein RP231</fullName>
    </recommendedName>
</protein>
<comment type="subcellular location">
    <subcellularLocation>
        <location evidence="2">Membrane</location>
        <topology evidence="2">Single-pass membrane protein</topology>
    </subcellularLocation>
</comment>
<sequence>MTDILDEVLSDQNEEKRLIFFKKLVPIIIIISIVVITIMVIIKNNKDNRIKNNQKNGDILVKTIGLDTTKDNKALAFNTLENLITSSNTKIKEIAALEQVAIRMSEKKYLGAKNLLNKIIDNEKYSEISTAYARIAWCCIVLDDQSLNIQDKGKLQKYLNYFDDEKKPFWATATIIKAILDIKHNMKTQAEKNLKNLLASNNVSDLLKDQAKALLVSLSK</sequence>
<dbReference type="EMBL" id="AJ235271">
    <property type="protein sequence ID" value="CAA14694.1"/>
    <property type="molecule type" value="Genomic_DNA"/>
</dbReference>
<dbReference type="PIR" id="D71677">
    <property type="entry name" value="D71677"/>
</dbReference>
<dbReference type="RefSeq" id="NP_220617.1">
    <property type="nucleotide sequence ID" value="NC_000963.1"/>
</dbReference>
<dbReference type="RefSeq" id="WP_004598561.1">
    <property type="nucleotide sequence ID" value="NC_000963.1"/>
</dbReference>
<dbReference type="SMR" id="Q9ZDU3"/>
<dbReference type="STRING" id="272947.gene:17555312"/>
<dbReference type="EnsemblBacteria" id="CAA14694">
    <property type="protein sequence ID" value="CAA14694"/>
    <property type="gene ID" value="CAA14694"/>
</dbReference>
<dbReference type="KEGG" id="rpr:RP231"/>
<dbReference type="PATRIC" id="fig|272947.5.peg.239"/>
<dbReference type="eggNOG" id="ENOG5030QHP">
    <property type="taxonomic scope" value="Bacteria"/>
</dbReference>
<dbReference type="HOGENOM" id="CLU_1260639_0_0_5"/>
<dbReference type="OrthoDB" id="7161063at2"/>
<dbReference type="Proteomes" id="UP000002480">
    <property type="component" value="Chromosome"/>
</dbReference>
<dbReference type="GO" id="GO:0016020">
    <property type="term" value="C:membrane"/>
    <property type="evidence" value="ECO:0007669"/>
    <property type="project" value="UniProtKB-SubCell"/>
</dbReference>
<dbReference type="InterPro" id="IPR022588">
    <property type="entry name" value="DUF2659"/>
</dbReference>
<dbReference type="Pfam" id="PF10858">
    <property type="entry name" value="DUF2659"/>
    <property type="match status" value="1"/>
</dbReference>
<keyword id="KW-0472">Membrane</keyword>
<keyword id="KW-1185">Reference proteome</keyword>
<keyword id="KW-0812">Transmembrane</keyword>
<keyword id="KW-1133">Transmembrane helix</keyword>
<accession>Q9ZDU3</accession>
<proteinExistence type="predicted"/>